<gene>
    <name type="ORF">SPAC23D3.16</name>
</gene>
<evidence type="ECO:0007829" key="1">
    <source>
        <dbReference type="PDB" id="8FW5"/>
    </source>
</evidence>
<feature type="chain" id="PRO_0000389143" description="Uncharacterized protein C23D3.16">
    <location>
        <begin position="1"/>
        <end position="81"/>
    </location>
</feature>
<feature type="helix" evidence="1">
    <location>
        <begin position="3"/>
        <end position="12"/>
    </location>
</feature>
<feature type="strand" evidence="1">
    <location>
        <begin position="15"/>
        <end position="17"/>
    </location>
</feature>
<feature type="strand" evidence="1">
    <location>
        <begin position="19"/>
        <end position="33"/>
    </location>
</feature>
<feature type="strand" evidence="1">
    <location>
        <begin position="37"/>
        <end position="40"/>
    </location>
</feature>
<feature type="helix" evidence="1">
    <location>
        <begin position="41"/>
        <end position="44"/>
    </location>
</feature>
<feature type="strand" evidence="1">
    <location>
        <begin position="49"/>
        <end position="56"/>
    </location>
</feature>
<feature type="strand" evidence="1">
    <location>
        <begin position="62"/>
        <end position="69"/>
    </location>
</feature>
<feature type="strand" evidence="1">
    <location>
        <begin position="72"/>
        <end position="79"/>
    </location>
</feature>
<keyword id="KW-0002">3D-structure</keyword>
<keyword id="KW-1185">Reference proteome</keyword>
<protein>
    <recommendedName>
        <fullName>Uncharacterized protein C23D3.16</fullName>
    </recommendedName>
</protein>
<dbReference type="EMBL" id="CU329670">
    <property type="protein sequence ID" value="CBA11505.2"/>
    <property type="molecule type" value="Genomic_DNA"/>
</dbReference>
<dbReference type="RefSeq" id="XP_002742514.2">
    <property type="nucleotide sequence ID" value="XM_002742468.2"/>
</dbReference>
<dbReference type="PDB" id="8FW5">
    <property type="method" value="EM"/>
    <property type="resolution" value="3.08 A"/>
    <property type="chains" value="I=1-81"/>
</dbReference>
<dbReference type="PDBsum" id="8FW5"/>
<dbReference type="SMR" id="C6Y4A8"/>
<dbReference type="BioGRID" id="1028570">
    <property type="interactions" value="2"/>
</dbReference>
<dbReference type="STRING" id="284812.C6Y4A8"/>
<dbReference type="iPTMnet" id="C6Y4A8"/>
<dbReference type="PaxDb" id="4896-SPAC23D3.16.1"/>
<dbReference type="EnsemblFungi" id="SPAC23D3.16.1">
    <property type="protein sequence ID" value="SPAC23D3.16.1:pep"/>
    <property type="gene ID" value="SPAC23D3.16"/>
</dbReference>
<dbReference type="PomBase" id="SPAC23D3.16"/>
<dbReference type="VEuPathDB" id="FungiDB:SPAC23D3.16"/>
<dbReference type="HOGENOM" id="CLU_2575227_0_0_1"/>
<dbReference type="InParanoid" id="C6Y4A8"/>
<dbReference type="OMA" id="ICEWNND"/>
<dbReference type="PRO" id="PR:C6Y4A8"/>
<dbReference type="Proteomes" id="UP000002485">
    <property type="component" value="Chromosome I"/>
</dbReference>
<dbReference type="GO" id="GO:0000329">
    <property type="term" value="C:fungal-type vacuole membrane"/>
    <property type="evidence" value="ECO:0000314"/>
    <property type="project" value="PomBase"/>
</dbReference>
<dbReference type="GO" id="GO:0071986">
    <property type="term" value="C:Ragulator complex"/>
    <property type="evidence" value="ECO:0000315"/>
    <property type="project" value="PomBase"/>
</dbReference>
<dbReference type="GO" id="GO:1903432">
    <property type="term" value="P:regulation of TORC1 signaling"/>
    <property type="evidence" value="ECO:0000315"/>
    <property type="project" value="PomBase"/>
</dbReference>
<name>YAEP_SCHPO</name>
<proteinExistence type="evidence at transcript level"/>
<accession>C6Y4A8</accession>
<reference key="1">
    <citation type="journal article" date="2002" name="Nature">
        <title>The genome sequence of Schizosaccharomyces pombe.</title>
        <authorList>
            <person name="Wood V."/>
            <person name="Gwilliam R."/>
            <person name="Rajandream M.A."/>
            <person name="Lyne M.H."/>
            <person name="Lyne R."/>
            <person name="Stewart A."/>
            <person name="Sgouros J.G."/>
            <person name="Peat N."/>
            <person name="Hayles J."/>
            <person name="Baker S.G."/>
            <person name="Basham D."/>
            <person name="Bowman S."/>
            <person name="Brooks K."/>
            <person name="Brown D."/>
            <person name="Brown S."/>
            <person name="Chillingworth T."/>
            <person name="Churcher C.M."/>
            <person name="Collins M."/>
            <person name="Connor R."/>
            <person name="Cronin A."/>
            <person name="Davis P."/>
            <person name="Feltwell T."/>
            <person name="Fraser A."/>
            <person name="Gentles S."/>
            <person name="Goble A."/>
            <person name="Hamlin N."/>
            <person name="Harris D.E."/>
            <person name="Hidalgo J."/>
            <person name="Hodgson G."/>
            <person name="Holroyd S."/>
            <person name="Hornsby T."/>
            <person name="Howarth S."/>
            <person name="Huckle E.J."/>
            <person name="Hunt S."/>
            <person name="Jagels K."/>
            <person name="James K.D."/>
            <person name="Jones L."/>
            <person name="Jones M."/>
            <person name="Leather S."/>
            <person name="McDonald S."/>
            <person name="McLean J."/>
            <person name="Mooney P."/>
            <person name="Moule S."/>
            <person name="Mungall K.L."/>
            <person name="Murphy L.D."/>
            <person name="Niblett D."/>
            <person name="Odell C."/>
            <person name="Oliver K."/>
            <person name="O'Neil S."/>
            <person name="Pearson D."/>
            <person name="Quail M.A."/>
            <person name="Rabbinowitsch E."/>
            <person name="Rutherford K.M."/>
            <person name="Rutter S."/>
            <person name="Saunders D."/>
            <person name="Seeger K."/>
            <person name="Sharp S."/>
            <person name="Skelton J."/>
            <person name="Simmonds M.N."/>
            <person name="Squares R."/>
            <person name="Squares S."/>
            <person name="Stevens K."/>
            <person name="Taylor K."/>
            <person name="Taylor R.G."/>
            <person name="Tivey A."/>
            <person name="Walsh S.V."/>
            <person name="Warren T."/>
            <person name="Whitehead S."/>
            <person name="Woodward J.R."/>
            <person name="Volckaert G."/>
            <person name="Aert R."/>
            <person name="Robben J."/>
            <person name="Grymonprez B."/>
            <person name="Weltjens I."/>
            <person name="Vanstreels E."/>
            <person name="Rieger M."/>
            <person name="Schaefer M."/>
            <person name="Mueller-Auer S."/>
            <person name="Gabel C."/>
            <person name="Fuchs M."/>
            <person name="Duesterhoeft A."/>
            <person name="Fritzc C."/>
            <person name="Holzer E."/>
            <person name="Moestl D."/>
            <person name="Hilbert H."/>
            <person name="Borzym K."/>
            <person name="Langer I."/>
            <person name="Beck A."/>
            <person name="Lehrach H."/>
            <person name="Reinhardt R."/>
            <person name="Pohl T.M."/>
            <person name="Eger P."/>
            <person name="Zimmermann W."/>
            <person name="Wedler H."/>
            <person name="Wambutt R."/>
            <person name="Purnelle B."/>
            <person name="Goffeau A."/>
            <person name="Cadieu E."/>
            <person name="Dreano S."/>
            <person name="Gloux S."/>
            <person name="Lelaure V."/>
            <person name="Mottier S."/>
            <person name="Galibert F."/>
            <person name="Aves S.J."/>
            <person name="Xiang Z."/>
            <person name="Hunt C."/>
            <person name="Moore K."/>
            <person name="Hurst S.M."/>
            <person name="Lucas M."/>
            <person name="Rochet M."/>
            <person name="Gaillardin C."/>
            <person name="Tallada V.A."/>
            <person name="Garzon A."/>
            <person name="Thode G."/>
            <person name="Daga R.R."/>
            <person name="Cruzado L."/>
            <person name="Jimenez J."/>
            <person name="Sanchez M."/>
            <person name="del Rey F."/>
            <person name="Benito J."/>
            <person name="Dominguez A."/>
            <person name="Revuelta J.L."/>
            <person name="Moreno S."/>
            <person name="Armstrong J."/>
            <person name="Forsburg S.L."/>
            <person name="Cerutti L."/>
            <person name="Lowe T."/>
            <person name="McCombie W.R."/>
            <person name="Paulsen I."/>
            <person name="Potashkin J."/>
            <person name="Shpakovski G.V."/>
            <person name="Ussery D."/>
            <person name="Barrell B.G."/>
            <person name="Nurse P."/>
        </authorList>
    </citation>
    <scope>NUCLEOTIDE SEQUENCE [LARGE SCALE GENOMIC DNA]</scope>
    <source>
        <strain>972 / ATCC 24843</strain>
    </source>
</reference>
<reference key="2">
    <citation type="journal article" date="2011" name="Science">
        <title>Comparative functional genomics of the fission yeasts.</title>
        <authorList>
            <person name="Rhind N."/>
            <person name="Chen Z."/>
            <person name="Yassour M."/>
            <person name="Thompson D.A."/>
            <person name="Haas B.J."/>
            <person name="Habib N."/>
            <person name="Wapinski I."/>
            <person name="Roy S."/>
            <person name="Lin M.F."/>
            <person name="Heiman D.I."/>
            <person name="Young S.K."/>
            <person name="Furuya K."/>
            <person name="Guo Y."/>
            <person name="Pidoux A."/>
            <person name="Chen H.M."/>
            <person name="Robbertse B."/>
            <person name="Goldberg J.M."/>
            <person name="Aoki K."/>
            <person name="Bayne E.H."/>
            <person name="Berlin A.M."/>
            <person name="Desjardins C.A."/>
            <person name="Dobbs E."/>
            <person name="Dukaj L."/>
            <person name="Fan L."/>
            <person name="FitzGerald M.G."/>
            <person name="French C."/>
            <person name="Gujja S."/>
            <person name="Hansen K."/>
            <person name="Keifenheim D."/>
            <person name="Levin J.Z."/>
            <person name="Mosher R.A."/>
            <person name="Mueller C.A."/>
            <person name="Pfiffner J."/>
            <person name="Priest M."/>
            <person name="Russ C."/>
            <person name="Smialowska A."/>
            <person name="Swoboda P."/>
            <person name="Sykes S.M."/>
            <person name="Vaughn M."/>
            <person name="Vengrova S."/>
            <person name="Yoder R."/>
            <person name="Zeng Q."/>
            <person name="Allshire R."/>
            <person name="Baulcombe D."/>
            <person name="Birren B.W."/>
            <person name="Brown W."/>
            <person name="Ekwall K."/>
            <person name="Kellis M."/>
            <person name="Leatherwood J."/>
            <person name="Levin H."/>
            <person name="Margalit H."/>
            <person name="Martienssen R."/>
            <person name="Nieduszynski C.A."/>
            <person name="Spatafora J.W."/>
            <person name="Friedman N."/>
            <person name="Dalgaard J.Z."/>
            <person name="Baumann P."/>
            <person name="Niki H."/>
            <person name="Regev A."/>
            <person name="Nusbaum C."/>
        </authorList>
    </citation>
    <scope>REVISION OF GENE MODEL</scope>
</reference>
<reference key="3">
    <citation type="journal article" date="2008" name="Nature">
        <title>Dynamic repertoire of a eukaryotic transcriptome surveyed at single-nucleotide resolution.</title>
        <authorList>
            <person name="Wilhelm B.T."/>
            <person name="Marguerat S."/>
            <person name="Watt S."/>
            <person name="Schubert F."/>
            <person name="Wood V."/>
            <person name="Goodhead I."/>
            <person name="Penkett C.J."/>
            <person name="Rogers J."/>
            <person name="Baehler J."/>
        </authorList>
    </citation>
    <scope>IDENTIFICATION</scope>
</reference>
<organism>
    <name type="scientific">Schizosaccharomyces pombe (strain 972 / ATCC 24843)</name>
    <name type="common">Fission yeast</name>
    <dbReference type="NCBI Taxonomy" id="284812"/>
    <lineage>
        <taxon>Eukaryota</taxon>
        <taxon>Fungi</taxon>
        <taxon>Dikarya</taxon>
        <taxon>Ascomycota</taxon>
        <taxon>Taphrinomycotina</taxon>
        <taxon>Schizosaccharomycetes</taxon>
        <taxon>Schizosaccharomycetales</taxon>
        <taxon>Schizosaccharomycetaceae</taxon>
        <taxon>Schizosaccharomyces</taxon>
    </lineage>
</organism>
<sequence length="81" mass="8975">MDSQLSENLLKCVNETYRGAMLVRNGLPIATAGDVNAEEQRVICEWNSNAVSEVLHLHDSNTKILIATKESCVLGLIYRNT</sequence>